<keyword id="KW-0025">Alternative splicing</keyword>
<keyword id="KW-0472">Membrane</keyword>
<keyword id="KW-1185">Reference proteome</keyword>
<keyword id="KW-0812">Transmembrane</keyword>
<keyword id="KW-1133">Transmembrane helix</keyword>
<comment type="subcellular location">
    <subcellularLocation>
        <location evidence="5">Membrane</location>
        <topology evidence="5">Multi-pass membrane protein</topology>
    </subcellularLocation>
</comment>
<comment type="alternative products">
    <event type="alternative splicing"/>
    <isoform>
        <id>Q6ZRR5-1</id>
        <name>1</name>
        <sequence type="displayed"/>
    </isoform>
    <isoform>
        <id>Q6ZRR5-2</id>
        <name>2</name>
        <sequence type="described" ref="VSP_024871"/>
    </isoform>
    <isoform>
        <id>Q6ZRR5-3</id>
        <name>3</name>
        <sequence type="described" ref="VSP_039853"/>
    </isoform>
    <isoform>
        <id>Q6ZRR5-4</id>
        <name>4</name>
        <sequence type="described" ref="VSP_039853 VSP_024871"/>
    </isoform>
</comment>
<comment type="similarity">
    <text evidence="5">Belongs to the TLCD5 family.</text>
</comment>
<name>TLCD5_HUMAN</name>
<reference key="1">
    <citation type="journal article" date="2004" name="Nat. Genet.">
        <title>Complete sequencing and characterization of 21,243 full-length human cDNAs.</title>
        <authorList>
            <person name="Ota T."/>
            <person name="Suzuki Y."/>
            <person name="Nishikawa T."/>
            <person name="Otsuki T."/>
            <person name="Sugiyama T."/>
            <person name="Irie R."/>
            <person name="Wakamatsu A."/>
            <person name="Hayashi K."/>
            <person name="Sato H."/>
            <person name="Nagai K."/>
            <person name="Kimura K."/>
            <person name="Makita H."/>
            <person name="Sekine M."/>
            <person name="Obayashi M."/>
            <person name="Nishi T."/>
            <person name="Shibahara T."/>
            <person name="Tanaka T."/>
            <person name="Ishii S."/>
            <person name="Yamamoto J."/>
            <person name="Saito K."/>
            <person name="Kawai Y."/>
            <person name="Isono Y."/>
            <person name="Nakamura Y."/>
            <person name="Nagahari K."/>
            <person name="Murakami K."/>
            <person name="Yasuda T."/>
            <person name="Iwayanagi T."/>
            <person name="Wagatsuma M."/>
            <person name="Shiratori A."/>
            <person name="Sudo H."/>
            <person name="Hosoiri T."/>
            <person name="Kaku Y."/>
            <person name="Kodaira H."/>
            <person name="Kondo H."/>
            <person name="Sugawara M."/>
            <person name="Takahashi M."/>
            <person name="Kanda K."/>
            <person name="Yokoi T."/>
            <person name="Furuya T."/>
            <person name="Kikkawa E."/>
            <person name="Omura Y."/>
            <person name="Abe K."/>
            <person name="Kamihara K."/>
            <person name="Katsuta N."/>
            <person name="Sato K."/>
            <person name="Tanikawa M."/>
            <person name="Yamazaki M."/>
            <person name="Ninomiya K."/>
            <person name="Ishibashi T."/>
            <person name="Yamashita H."/>
            <person name="Murakawa K."/>
            <person name="Fujimori K."/>
            <person name="Tanai H."/>
            <person name="Kimata M."/>
            <person name="Watanabe M."/>
            <person name="Hiraoka S."/>
            <person name="Chiba Y."/>
            <person name="Ishida S."/>
            <person name="Ono Y."/>
            <person name="Takiguchi S."/>
            <person name="Watanabe S."/>
            <person name="Yosida M."/>
            <person name="Hotuta T."/>
            <person name="Kusano J."/>
            <person name="Kanehori K."/>
            <person name="Takahashi-Fujii A."/>
            <person name="Hara H."/>
            <person name="Tanase T.-O."/>
            <person name="Nomura Y."/>
            <person name="Togiya S."/>
            <person name="Komai F."/>
            <person name="Hara R."/>
            <person name="Takeuchi K."/>
            <person name="Arita M."/>
            <person name="Imose N."/>
            <person name="Musashino K."/>
            <person name="Yuuki H."/>
            <person name="Oshima A."/>
            <person name="Sasaki N."/>
            <person name="Aotsuka S."/>
            <person name="Yoshikawa Y."/>
            <person name="Matsunawa H."/>
            <person name="Ichihara T."/>
            <person name="Shiohata N."/>
            <person name="Sano S."/>
            <person name="Moriya S."/>
            <person name="Momiyama H."/>
            <person name="Satoh N."/>
            <person name="Takami S."/>
            <person name="Terashima Y."/>
            <person name="Suzuki O."/>
            <person name="Nakagawa S."/>
            <person name="Senoh A."/>
            <person name="Mizoguchi H."/>
            <person name="Goto Y."/>
            <person name="Shimizu F."/>
            <person name="Wakebe H."/>
            <person name="Hishigaki H."/>
            <person name="Watanabe T."/>
            <person name="Sugiyama A."/>
            <person name="Takemoto M."/>
            <person name="Kawakami B."/>
            <person name="Yamazaki M."/>
            <person name="Watanabe K."/>
            <person name="Kumagai A."/>
            <person name="Itakura S."/>
            <person name="Fukuzumi Y."/>
            <person name="Fujimori Y."/>
            <person name="Komiyama M."/>
            <person name="Tashiro H."/>
            <person name="Tanigami A."/>
            <person name="Fujiwara T."/>
            <person name="Ono T."/>
            <person name="Yamada K."/>
            <person name="Fujii Y."/>
            <person name="Ozaki K."/>
            <person name="Hirao M."/>
            <person name="Ohmori Y."/>
            <person name="Kawabata A."/>
            <person name="Hikiji T."/>
            <person name="Kobatake N."/>
            <person name="Inagaki H."/>
            <person name="Ikema Y."/>
            <person name="Okamoto S."/>
            <person name="Okitani R."/>
            <person name="Kawakami T."/>
            <person name="Noguchi S."/>
            <person name="Itoh T."/>
            <person name="Shigeta K."/>
            <person name="Senba T."/>
            <person name="Matsumura K."/>
            <person name="Nakajima Y."/>
            <person name="Mizuno T."/>
            <person name="Morinaga M."/>
            <person name="Sasaki M."/>
            <person name="Togashi T."/>
            <person name="Oyama M."/>
            <person name="Hata H."/>
            <person name="Watanabe M."/>
            <person name="Komatsu T."/>
            <person name="Mizushima-Sugano J."/>
            <person name="Satoh T."/>
            <person name="Shirai Y."/>
            <person name="Takahashi Y."/>
            <person name="Nakagawa K."/>
            <person name="Okumura K."/>
            <person name="Nagase T."/>
            <person name="Nomura N."/>
            <person name="Kikuchi H."/>
            <person name="Masuho Y."/>
            <person name="Yamashita R."/>
            <person name="Nakai K."/>
            <person name="Yada T."/>
            <person name="Nakamura Y."/>
            <person name="Ohara O."/>
            <person name="Isogai T."/>
            <person name="Sugano S."/>
        </authorList>
    </citation>
    <scope>NUCLEOTIDE SEQUENCE [LARGE SCALE MRNA] (ISOFORMS 1; 2 AND 3)</scope>
    <source>
        <tissue>Brain</tissue>
        <tissue>Testis</tissue>
        <tissue>Trachea</tissue>
    </source>
</reference>
<reference key="2">
    <citation type="journal article" date="2006" name="Nature">
        <title>Human chromosome 11 DNA sequence and analysis including novel gene identification.</title>
        <authorList>
            <person name="Taylor T.D."/>
            <person name="Noguchi H."/>
            <person name="Totoki Y."/>
            <person name="Toyoda A."/>
            <person name="Kuroki Y."/>
            <person name="Dewar K."/>
            <person name="Lloyd C."/>
            <person name="Itoh T."/>
            <person name="Takeda T."/>
            <person name="Kim D.-W."/>
            <person name="She X."/>
            <person name="Barlow K.F."/>
            <person name="Bloom T."/>
            <person name="Bruford E."/>
            <person name="Chang J.L."/>
            <person name="Cuomo C.A."/>
            <person name="Eichler E."/>
            <person name="FitzGerald M.G."/>
            <person name="Jaffe D.B."/>
            <person name="LaButti K."/>
            <person name="Nicol R."/>
            <person name="Park H.-S."/>
            <person name="Seaman C."/>
            <person name="Sougnez C."/>
            <person name="Yang X."/>
            <person name="Zimmer A.R."/>
            <person name="Zody M.C."/>
            <person name="Birren B.W."/>
            <person name="Nusbaum C."/>
            <person name="Fujiyama A."/>
            <person name="Hattori M."/>
            <person name="Rogers J."/>
            <person name="Lander E.S."/>
            <person name="Sakaki Y."/>
        </authorList>
    </citation>
    <scope>NUCLEOTIDE SEQUENCE [LARGE SCALE GENOMIC DNA]</scope>
</reference>
<reference key="3">
    <citation type="journal article" date="2004" name="Genome Res.">
        <title>The status, quality, and expansion of the NIH full-length cDNA project: the Mammalian Gene Collection (MGC).</title>
        <authorList>
            <consortium name="The MGC Project Team"/>
        </authorList>
    </citation>
    <scope>NUCLEOTIDE SEQUENCE [LARGE SCALE MRNA] (ISOFORM 4)</scope>
    <source>
        <tissue>Pancreas</tissue>
    </source>
</reference>
<feature type="chain" id="PRO_0000285583" description="TLC domain-containing protein 5">
    <location>
        <begin position="1"/>
        <end position="245"/>
    </location>
</feature>
<feature type="transmembrane region" description="Helical" evidence="1">
    <location>
        <begin position="1"/>
        <end position="21"/>
    </location>
</feature>
<feature type="transmembrane region" description="Helical" evidence="1">
    <location>
        <begin position="38"/>
        <end position="58"/>
    </location>
</feature>
<feature type="transmembrane region" description="Helical" evidence="1">
    <location>
        <begin position="75"/>
        <end position="95"/>
    </location>
</feature>
<feature type="transmembrane region" description="Helical" evidence="1">
    <location>
        <begin position="99"/>
        <end position="119"/>
    </location>
</feature>
<feature type="transmembrane region" description="Helical" evidence="1">
    <location>
        <begin position="162"/>
        <end position="182"/>
    </location>
</feature>
<feature type="transmembrane region" description="Helical" evidence="1">
    <location>
        <begin position="191"/>
        <end position="211"/>
    </location>
</feature>
<feature type="domain" description="TLC" evidence="2">
    <location>
        <begin position="29"/>
        <end position="204"/>
    </location>
</feature>
<feature type="splice variant" id="VSP_039853" description="In isoform 3 and isoform 4." evidence="3 4">
    <original>M</original>
    <variation>MTQCCFLRVHPLFFWFWSFHHRM</variation>
    <location>
        <position position="1"/>
    </location>
</feature>
<feature type="splice variant" id="VSP_024871" description="In isoform 2 and isoform 4." evidence="3 4">
    <original>WCVYFQSEGALMLAHHTLSILGIIMALVLGESGTEVNAVLFGSELTNPLLQMRWFLRETGHYHSFTGDVVDFLFVALFTGVRIGVGACLLFCEMVSPTPKWFVKAGGVAMYAVSWCFMFS</original>
    <variation>C</variation>
    <location>
        <begin position="91"/>
        <end position="210"/>
    </location>
</feature>
<feature type="sequence conflict" description="In Ref. 1; BAC87244." evidence="5" ref="1">
    <original>M</original>
    <variation>I</variation>
    <location>
        <position position="102"/>
    </location>
</feature>
<feature type="sequence conflict" description="In Ref. 1; BAG64992." evidence="5" ref="1">
    <original>L</original>
    <variation>P</variation>
    <location>
        <position position="130"/>
    </location>
</feature>
<evidence type="ECO:0000255" key="1"/>
<evidence type="ECO:0000255" key="2">
    <source>
        <dbReference type="PROSITE-ProRule" id="PRU00205"/>
    </source>
</evidence>
<evidence type="ECO:0000303" key="3">
    <source>
    </source>
</evidence>
<evidence type="ECO:0000303" key="4">
    <source>
    </source>
</evidence>
<evidence type="ECO:0000305" key="5"/>
<evidence type="ECO:0000312" key="6">
    <source>
        <dbReference type="HGNC" id="HGNC:28280"/>
    </source>
</evidence>
<gene>
    <name evidence="6" type="primary">TLCD5</name>
    <name type="synonym">TMEM136</name>
</gene>
<accession>Q6ZRR5</accession>
<accession>B4DGQ4</accession>
<accession>B4E230</accession>
<accession>Q8IZ79</accession>
<protein>
    <recommendedName>
        <fullName evidence="5">TLC domain-containing protein 5</fullName>
    </recommendedName>
    <alternativeName>
        <fullName>Transmembrane protein 136</fullName>
    </alternativeName>
</protein>
<sequence>MALALCLQVLCSLCGWLSLYISFCHLNKHRSYEWSCRLVTFTHGVLSIGLSAYIGFIDGPWPFTHPGSPNTPLQVHVLCLTLGYFIFDLGWCVYFQSEGALMLAHHTLSILGIIMALVLGESGTEVNAVLFGSELTNPLLQMRWFLRETGHYHSFTGDVVDFLFVALFTGVRIGVGACLLFCEMVSPTPKWFVKAGGVAMYAVSWCFMFSIWRFAWRKSIKKYHAWRSRRSEERQLKHNGHLKIH</sequence>
<organism>
    <name type="scientific">Homo sapiens</name>
    <name type="common">Human</name>
    <dbReference type="NCBI Taxonomy" id="9606"/>
    <lineage>
        <taxon>Eukaryota</taxon>
        <taxon>Metazoa</taxon>
        <taxon>Chordata</taxon>
        <taxon>Craniata</taxon>
        <taxon>Vertebrata</taxon>
        <taxon>Euteleostomi</taxon>
        <taxon>Mammalia</taxon>
        <taxon>Eutheria</taxon>
        <taxon>Euarchontoglires</taxon>
        <taxon>Primates</taxon>
        <taxon>Haplorrhini</taxon>
        <taxon>Catarrhini</taxon>
        <taxon>Hominidae</taxon>
        <taxon>Homo</taxon>
    </lineage>
</organism>
<proteinExistence type="evidence at transcript level"/>
<dbReference type="EMBL" id="AK128040">
    <property type="protein sequence ID" value="BAC87244.1"/>
    <property type="molecule type" value="mRNA"/>
</dbReference>
<dbReference type="EMBL" id="AK294713">
    <property type="protein sequence ID" value="BAG57865.1"/>
    <property type="molecule type" value="mRNA"/>
</dbReference>
<dbReference type="EMBL" id="AK304086">
    <property type="protein sequence ID" value="BAG64992.1"/>
    <property type="molecule type" value="mRNA"/>
</dbReference>
<dbReference type="EMBL" id="AP001150">
    <property type="status" value="NOT_ANNOTATED_CDS"/>
    <property type="molecule type" value="Genomic_DNA"/>
</dbReference>
<dbReference type="EMBL" id="BC015232">
    <property type="protein sequence ID" value="AAH15232.2"/>
    <property type="molecule type" value="mRNA"/>
</dbReference>
<dbReference type="CCDS" id="CCDS55792.1">
    <molecule id="Q6ZRR5-3"/>
</dbReference>
<dbReference type="CCDS" id="CCDS55793.1">
    <molecule id="Q6ZRR5-1"/>
</dbReference>
<dbReference type="CCDS" id="CCDS8432.1">
    <molecule id="Q6ZRR5-4"/>
</dbReference>
<dbReference type="RefSeq" id="NP_001185599.1">
    <molecule id="Q6ZRR5-3"/>
    <property type="nucleotide sequence ID" value="NM_001198670.2"/>
</dbReference>
<dbReference type="RefSeq" id="NP_001185600.1">
    <molecule id="Q6ZRR5-1"/>
    <property type="nucleotide sequence ID" value="NM_001198671.2"/>
</dbReference>
<dbReference type="RefSeq" id="NP_001185601.1">
    <property type="nucleotide sequence ID" value="NM_001198672.1"/>
</dbReference>
<dbReference type="RefSeq" id="NP_001185602.1">
    <property type="nucleotide sequence ID" value="NM_001198673.1"/>
</dbReference>
<dbReference type="RefSeq" id="NP_001185603.1">
    <molecule id="Q6ZRR5-2"/>
    <property type="nucleotide sequence ID" value="NM_001198674.2"/>
</dbReference>
<dbReference type="RefSeq" id="NP_001185604.1">
    <property type="nucleotide sequence ID" value="NM_001198675.1"/>
</dbReference>
<dbReference type="RefSeq" id="NP_777586.1">
    <molecule id="Q6ZRR5-4"/>
    <property type="nucleotide sequence ID" value="NM_174926.3"/>
</dbReference>
<dbReference type="RefSeq" id="XP_016872816.1">
    <property type="nucleotide sequence ID" value="XM_017017327.1"/>
</dbReference>
<dbReference type="BioGRID" id="128593">
    <property type="interactions" value="29"/>
</dbReference>
<dbReference type="FunCoup" id="Q6ZRR5">
    <property type="interactions" value="38"/>
</dbReference>
<dbReference type="IntAct" id="Q6ZRR5">
    <property type="interactions" value="20"/>
</dbReference>
<dbReference type="STRING" id="9606.ENSP00000312672"/>
<dbReference type="GlyGen" id="Q6ZRR5">
    <property type="glycosylation" value="1 site"/>
</dbReference>
<dbReference type="BioMuta" id="TMEM136"/>
<dbReference type="DMDM" id="308153509"/>
<dbReference type="MassIVE" id="Q6ZRR5"/>
<dbReference type="PaxDb" id="9606-ENSP00000312672"/>
<dbReference type="Antibodypedia" id="71703">
    <property type="antibodies" value="17 antibodies from 9 providers"/>
</dbReference>
<dbReference type="DNASU" id="219902"/>
<dbReference type="Ensembl" id="ENST00000314475.6">
    <molecule id="Q6ZRR5-3"/>
    <property type="protein sequence ID" value="ENSP00000312672.2"/>
    <property type="gene ID" value="ENSG00000181264.9"/>
</dbReference>
<dbReference type="Ensembl" id="ENST00000375095.3">
    <molecule id="Q6ZRR5-1"/>
    <property type="protein sequence ID" value="ENSP00000364236.3"/>
    <property type="gene ID" value="ENSG00000181264.9"/>
</dbReference>
<dbReference type="Ensembl" id="ENST00000529187.1">
    <molecule id="Q6ZRR5-4"/>
    <property type="protein sequence ID" value="ENSP00000434862.1"/>
    <property type="gene ID" value="ENSG00000181264.9"/>
</dbReference>
<dbReference type="GeneID" id="219902"/>
<dbReference type="KEGG" id="hsa:219902"/>
<dbReference type="MANE-Select" id="ENST00000375095.3">
    <property type="protein sequence ID" value="ENSP00000364236.3"/>
    <property type="RefSeq nucleotide sequence ID" value="NM_001198671.2"/>
    <property type="RefSeq protein sequence ID" value="NP_001185600.1"/>
</dbReference>
<dbReference type="UCSC" id="uc001pxg.4">
    <molecule id="Q6ZRR5-1"/>
    <property type="organism name" value="human"/>
</dbReference>
<dbReference type="AGR" id="HGNC:28280"/>
<dbReference type="CTD" id="219902"/>
<dbReference type="DisGeNET" id="219902"/>
<dbReference type="GeneCards" id="TLCD5"/>
<dbReference type="HGNC" id="HGNC:28280">
    <property type="gene designation" value="TLCD5"/>
</dbReference>
<dbReference type="HPA" id="ENSG00000181264">
    <property type="expression patterns" value="Tissue enhanced (retina)"/>
</dbReference>
<dbReference type="neXtProt" id="NX_Q6ZRR5"/>
<dbReference type="OpenTargets" id="ENSG00000181264"/>
<dbReference type="PharmGKB" id="PA144596257"/>
<dbReference type="VEuPathDB" id="HostDB:ENSG00000181264"/>
<dbReference type="eggNOG" id="KOG4474">
    <property type="taxonomic scope" value="Eukaryota"/>
</dbReference>
<dbReference type="GeneTree" id="ENSGT00390000008162"/>
<dbReference type="HOGENOM" id="CLU_083447_0_0_1"/>
<dbReference type="InParanoid" id="Q6ZRR5"/>
<dbReference type="OrthoDB" id="506011at2759"/>
<dbReference type="PAN-GO" id="Q6ZRR5">
    <property type="GO annotations" value="0 GO annotations based on evolutionary models"/>
</dbReference>
<dbReference type="PhylomeDB" id="Q6ZRR5"/>
<dbReference type="TreeFam" id="TF329126"/>
<dbReference type="PathwayCommons" id="Q6ZRR5"/>
<dbReference type="BioGRID-ORCS" id="219902">
    <property type="hits" value="10 hits in 1149 CRISPR screens"/>
</dbReference>
<dbReference type="ChiTaRS" id="TMEM136">
    <property type="organism name" value="human"/>
</dbReference>
<dbReference type="GenomeRNAi" id="219902"/>
<dbReference type="Pharos" id="Q6ZRR5">
    <property type="development level" value="Tdark"/>
</dbReference>
<dbReference type="PRO" id="PR:Q6ZRR5"/>
<dbReference type="Proteomes" id="UP000005640">
    <property type="component" value="Chromosome 11"/>
</dbReference>
<dbReference type="RNAct" id="Q6ZRR5">
    <property type="molecule type" value="protein"/>
</dbReference>
<dbReference type="Bgee" id="ENSG00000181264">
    <property type="expression patterns" value="Expressed in oviduct epithelium and 146 other cell types or tissues"/>
</dbReference>
<dbReference type="GO" id="GO:0016020">
    <property type="term" value="C:membrane"/>
    <property type="evidence" value="ECO:0007669"/>
    <property type="project" value="UniProtKB-SubCell"/>
</dbReference>
<dbReference type="InterPro" id="IPR006634">
    <property type="entry name" value="TLC-dom"/>
</dbReference>
<dbReference type="InterPro" id="IPR042512">
    <property type="entry name" value="TLCD5"/>
</dbReference>
<dbReference type="PANTHER" id="PTHR31898:SF1">
    <property type="entry name" value="TLC DOMAIN-CONTAINING PROTEIN 5"/>
    <property type="match status" value="1"/>
</dbReference>
<dbReference type="PANTHER" id="PTHR31898">
    <property type="entry name" value="TRANSMEMBRANE PROTEIN 136"/>
    <property type="match status" value="1"/>
</dbReference>
<dbReference type="SMART" id="SM00724">
    <property type="entry name" value="TLC"/>
    <property type="match status" value="1"/>
</dbReference>
<dbReference type="PROSITE" id="PS50922">
    <property type="entry name" value="TLC"/>
    <property type="match status" value="1"/>
</dbReference>